<sequence>MTNVTGTERVKRGMAEMQKGGVIMDVINAEQAKIAEEAGAVAVMALERVPADIRAAGGVSRMADPTIVEEVMGAVSIPVMAKCRIGHLVEARVLESLGVDYIDESEVLTPADEVYHLNKRDYTVPFVCGCRDIGEAARRIAEGASMLRTKGEPGTGNIVEAVRHMRQVNAEIRQVASLREDELMTYAKNTGAPYEVLLEIKRLGRLPVVNFAAGGVATPADAALMMQLGADGVFVGSGIFKSENPAKFARAIVEATTHYEDYELIASLSKGLGNAMKGIEISTLLPEQRMQERGW</sequence>
<organism>
    <name type="scientific">Bacillus thuringiensis subsp. konkukian (strain 97-27)</name>
    <dbReference type="NCBI Taxonomy" id="281309"/>
    <lineage>
        <taxon>Bacteria</taxon>
        <taxon>Bacillati</taxon>
        <taxon>Bacillota</taxon>
        <taxon>Bacilli</taxon>
        <taxon>Bacillales</taxon>
        <taxon>Bacillaceae</taxon>
        <taxon>Bacillus</taxon>
        <taxon>Bacillus cereus group</taxon>
    </lineage>
</organism>
<accession>Q6HQ05</accession>
<comment type="function">
    <text evidence="1">Catalyzes the formation of pyridoxal 5'-phosphate from ribose 5-phosphate (RBP), glyceraldehyde 3-phosphate (G3P) and ammonia. The ammonia is provided by the PdxT subunit. Can also use ribulose 5-phosphate and dihydroxyacetone phosphate as substrates, resulting from enzyme-catalyzed isomerization of RBP and G3P, respectively.</text>
</comment>
<comment type="catalytic activity">
    <reaction evidence="1">
        <text>aldehydo-D-ribose 5-phosphate + D-glyceraldehyde 3-phosphate + L-glutamine = pyridoxal 5'-phosphate + L-glutamate + phosphate + 3 H2O + H(+)</text>
        <dbReference type="Rhea" id="RHEA:31507"/>
        <dbReference type="ChEBI" id="CHEBI:15377"/>
        <dbReference type="ChEBI" id="CHEBI:15378"/>
        <dbReference type="ChEBI" id="CHEBI:29985"/>
        <dbReference type="ChEBI" id="CHEBI:43474"/>
        <dbReference type="ChEBI" id="CHEBI:58273"/>
        <dbReference type="ChEBI" id="CHEBI:58359"/>
        <dbReference type="ChEBI" id="CHEBI:59776"/>
        <dbReference type="ChEBI" id="CHEBI:597326"/>
        <dbReference type="EC" id="4.3.3.6"/>
    </reaction>
</comment>
<comment type="pathway">
    <text evidence="1">Cofactor biosynthesis; pyridoxal 5'-phosphate biosynthesis.</text>
</comment>
<comment type="subunit">
    <text evidence="1">In the presence of PdxT, forms a dodecamer of heterodimers.</text>
</comment>
<comment type="similarity">
    <text evidence="1">Belongs to the PdxS/SNZ family.</text>
</comment>
<proteinExistence type="inferred from homology"/>
<dbReference type="EC" id="4.3.3.6" evidence="1"/>
<dbReference type="EMBL" id="AE017355">
    <property type="protein sequence ID" value="AAT58892.1"/>
    <property type="molecule type" value="Genomic_DNA"/>
</dbReference>
<dbReference type="RefSeq" id="WP_000186156.1">
    <property type="nucleotide sequence ID" value="NC_005957.1"/>
</dbReference>
<dbReference type="RefSeq" id="YP_034370.1">
    <property type="nucleotide sequence ID" value="NC_005957.1"/>
</dbReference>
<dbReference type="SMR" id="Q6HQ05"/>
<dbReference type="GeneID" id="93011062"/>
<dbReference type="KEGG" id="btk:BT9727_0011"/>
<dbReference type="PATRIC" id="fig|281309.8.peg.11"/>
<dbReference type="HOGENOM" id="CLU_055352_1_0_9"/>
<dbReference type="UniPathway" id="UPA00245"/>
<dbReference type="Proteomes" id="UP000001301">
    <property type="component" value="Chromosome"/>
</dbReference>
<dbReference type="GO" id="GO:0036381">
    <property type="term" value="F:pyridoxal 5'-phosphate synthase (glutamine hydrolysing) activity"/>
    <property type="evidence" value="ECO:0007669"/>
    <property type="project" value="UniProtKB-UniRule"/>
</dbReference>
<dbReference type="GO" id="GO:0006520">
    <property type="term" value="P:amino acid metabolic process"/>
    <property type="evidence" value="ECO:0007669"/>
    <property type="project" value="TreeGrafter"/>
</dbReference>
<dbReference type="GO" id="GO:0042823">
    <property type="term" value="P:pyridoxal phosphate biosynthetic process"/>
    <property type="evidence" value="ECO:0007669"/>
    <property type="project" value="UniProtKB-UniRule"/>
</dbReference>
<dbReference type="GO" id="GO:0008615">
    <property type="term" value="P:pyridoxine biosynthetic process"/>
    <property type="evidence" value="ECO:0007669"/>
    <property type="project" value="TreeGrafter"/>
</dbReference>
<dbReference type="CDD" id="cd04727">
    <property type="entry name" value="pdxS"/>
    <property type="match status" value="1"/>
</dbReference>
<dbReference type="FunFam" id="3.20.20.70:FF:000001">
    <property type="entry name" value="Pyridoxine biosynthesis protein PDX1"/>
    <property type="match status" value="1"/>
</dbReference>
<dbReference type="Gene3D" id="3.20.20.70">
    <property type="entry name" value="Aldolase class I"/>
    <property type="match status" value="1"/>
</dbReference>
<dbReference type="HAMAP" id="MF_01824">
    <property type="entry name" value="PdxS"/>
    <property type="match status" value="1"/>
</dbReference>
<dbReference type="InterPro" id="IPR013785">
    <property type="entry name" value="Aldolase_TIM"/>
</dbReference>
<dbReference type="InterPro" id="IPR001852">
    <property type="entry name" value="PdxS/SNZ"/>
</dbReference>
<dbReference type="InterPro" id="IPR033755">
    <property type="entry name" value="PdxS/SNZ_N"/>
</dbReference>
<dbReference type="InterPro" id="IPR011060">
    <property type="entry name" value="RibuloseP-bd_barrel"/>
</dbReference>
<dbReference type="NCBIfam" id="NF003215">
    <property type="entry name" value="PRK04180.1"/>
    <property type="match status" value="1"/>
</dbReference>
<dbReference type="NCBIfam" id="TIGR00343">
    <property type="entry name" value="pyridoxal 5'-phosphate synthase lyase subunit PdxS"/>
    <property type="match status" value="1"/>
</dbReference>
<dbReference type="PANTHER" id="PTHR31829">
    <property type="entry name" value="PYRIDOXAL 5'-PHOSPHATE SYNTHASE SUBUNIT SNZ1-RELATED"/>
    <property type="match status" value="1"/>
</dbReference>
<dbReference type="PANTHER" id="PTHR31829:SF0">
    <property type="entry name" value="PYRIDOXAL 5'-PHOSPHATE SYNTHASE SUBUNIT SNZ1-RELATED"/>
    <property type="match status" value="1"/>
</dbReference>
<dbReference type="Pfam" id="PF01680">
    <property type="entry name" value="SOR_SNZ"/>
    <property type="match status" value="1"/>
</dbReference>
<dbReference type="PIRSF" id="PIRSF029271">
    <property type="entry name" value="Pdx1"/>
    <property type="match status" value="1"/>
</dbReference>
<dbReference type="SUPFAM" id="SSF51366">
    <property type="entry name" value="Ribulose-phoshate binding barrel"/>
    <property type="match status" value="1"/>
</dbReference>
<dbReference type="PROSITE" id="PS01235">
    <property type="entry name" value="PDXS_SNZ_1"/>
    <property type="match status" value="1"/>
</dbReference>
<dbReference type="PROSITE" id="PS51129">
    <property type="entry name" value="PDXS_SNZ_2"/>
    <property type="match status" value="1"/>
</dbReference>
<protein>
    <recommendedName>
        <fullName evidence="1">Pyridoxal 5'-phosphate synthase subunit PdxS</fullName>
        <shortName evidence="1">PLP synthase subunit PdxS</shortName>
        <ecNumber evidence="1">4.3.3.6</ecNumber>
    </recommendedName>
    <alternativeName>
        <fullName evidence="1">Pdx1</fullName>
    </alternativeName>
</protein>
<feature type="chain" id="PRO_0000109380" description="Pyridoxal 5'-phosphate synthase subunit PdxS">
    <location>
        <begin position="1"/>
        <end position="295"/>
    </location>
</feature>
<feature type="active site" description="Schiff-base intermediate with D-ribose 5-phosphate" evidence="1">
    <location>
        <position position="82"/>
    </location>
</feature>
<feature type="binding site" evidence="1">
    <location>
        <position position="25"/>
    </location>
    <ligand>
        <name>D-ribose 5-phosphate</name>
        <dbReference type="ChEBI" id="CHEBI:78346"/>
    </ligand>
</feature>
<feature type="binding site" evidence="1">
    <location>
        <position position="154"/>
    </location>
    <ligand>
        <name>D-ribose 5-phosphate</name>
        <dbReference type="ChEBI" id="CHEBI:78346"/>
    </ligand>
</feature>
<feature type="binding site" evidence="1">
    <location>
        <position position="166"/>
    </location>
    <ligand>
        <name>D-glyceraldehyde 3-phosphate</name>
        <dbReference type="ChEBI" id="CHEBI:59776"/>
    </ligand>
</feature>
<feature type="binding site" evidence="1">
    <location>
        <position position="215"/>
    </location>
    <ligand>
        <name>D-ribose 5-phosphate</name>
        <dbReference type="ChEBI" id="CHEBI:78346"/>
    </ligand>
</feature>
<feature type="binding site" evidence="1">
    <location>
        <begin position="236"/>
        <end position="237"/>
    </location>
    <ligand>
        <name>D-ribose 5-phosphate</name>
        <dbReference type="ChEBI" id="CHEBI:78346"/>
    </ligand>
</feature>
<keyword id="KW-0456">Lyase</keyword>
<keyword id="KW-0663">Pyridoxal phosphate</keyword>
<keyword id="KW-0704">Schiff base</keyword>
<name>PDXS_BACHK</name>
<gene>
    <name evidence="1" type="primary">pdxS</name>
    <name type="ordered locus">BT9727_0011</name>
</gene>
<evidence type="ECO:0000255" key="1">
    <source>
        <dbReference type="HAMAP-Rule" id="MF_01824"/>
    </source>
</evidence>
<reference key="1">
    <citation type="journal article" date="2006" name="J. Bacteriol.">
        <title>Pathogenomic sequence analysis of Bacillus cereus and Bacillus thuringiensis isolates closely related to Bacillus anthracis.</title>
        <authorList>
            <person name="Han C.S."/>
            <person name="Xie G."/>
            <person name="Challacombe J.F."/>
            <person name="Altherr M.R."/>
            <person name="Bhotika S.S."/>
            <person name="Bruce D."/>
            <person name="Campbell C.S."/>
            <person name="Campbell M.L."/>
            <person name="Chen J."/>
            <person name="Chertkov O."/>
            <person name="Cleland C."/>
            <person name="Dimitrijevic M."/>
            <person name="Doggett N.A."/>
            <person name="Fawcett J.J."/>
            <person name="Glavina T."/>
            <person name="Goodwin L.A."/>
            <person name="Hill K.K."/>
            <person name="Hitchcock P."/>
            <person name="Jackson P.J."/>
            <person name="Keim P."/>
            <person name="Kewalramani A.R."/>
            <person name="Longmire J."/>
            <person name="Lucas S."/>
            <person name="Malfatti S."/>
            <person name="McMurry K."/>
            <person name="Meincke L.J."/>
            <person name="Misra M."/>
            <person name="Moseman B.L."/>
            <person name="Mundt M."/>
            <person name="Munk A.C."/>
            <person name="Okinaka R.T."/>
            <person name="Parson-Quintana B."/>
            <person name="Reilly L.P."/>
            <person name="Richardson P."/>
            <person name="Robinson D.L."/>
            <person name="Rubin E."/>
            <person name="Saunders E."/>
            <person name="Tapia R."/>
            <person name="Tesmer J.G."/>
            <person name="Thayer N."/>
            <person name="Thompson L.S."/>
            <person name="Tice H."/>
            <person name="Ticknor L.O."/>
            <person name="Wills P.L."/>
            <person name="Brettin T.S."/>
            <person name="Gilna P."/>
        </authorList>
    </citation>
    <scope>NUCLEOTIDE SEQUENCE [LARGE SCALE GENOMIC DNA]</scope>
    <source>
        <strain>97-27</strain>
    </source>
</reference>